<keyword id="KW-0030">Aminoacyl-tRNA synthetase</keyword>
<keyword id="KW-0067">ATP-binding</keyword>
<keyword id="KW-0963">Cytoplasm</keyword>
<keyword id="KW-0436">Ligase</keyword>
<keyword id="KW-0460">Magnesium</keyword>
<keyword id="KW-0479">Metal-binding</keyword>
<keyword id="KW-0547">Nucleotide-binding</keyword>
<keyword id="KW-0648">Protein biosynthesis</keyword>
<dbReference type="EC" id="6.1.1.20" evidence="1"/>
<dbReference type="EMBL" id="CP000048">
    <property type="protein sequence ID" value="AAX17022.1"/>
    <property type="molecule type" value="Genomic_DNA"/>
</dbReference>
<dbReference type="RefSeq" id="WP_012422274.1">
    <property type="nucleotide sequence ID" value="NZ_CP073136.1"/>
</dbReference>
<dbReference type="SMR" id="B2S0L6"/>
<dbReference type="GeneID" id="71843331"/>
<dbReference type="KEGG" id="bhr:BH0514"/>
<dbReference type="HOGENOM" id="CLU_020279_3_0_12"/>
<dbReference type="Proteomes" id="UP000008834">
    <property type="component" value="Chromosome"/>
</dbReference>
<dbReference type="GO" id="GO:0009328">
    <property type="term" value="C:phenylalanine-tRNA ligase complex"/>
    <property type="evidence" value="ECO:0007669"/>
    <property type="project" value="TreeGrafter"/>
</dbReference>
<dbReference type="GO" id="GO:0005524">
    <property type="term" value="F:ATP binding"/>
    <property type="evidence" value="ECO:0007669"/>
    <property type="project" value="UniProtKB-UniRule"/>
</dbReference>
<dbReference type="GO" id="GO:0000287">
    <property type="term" value="F:magnesium ion binding"/>
    <property type="evidence" value="ECO:0007669"/>
    <property type="project" value="InterPro"/>
</dbReference>
<dbReference type="GO" id="GO:0004826">
    <property type="term" value="F:phenylalanine-tRNA ligase activity"/>
    <property type="evidence" value="ECO:0007669"/>
    <property type="project" value="UniProtKB-UniRule"/>
</dbReference>
<dbReference type="GO" id="GO:0003723">
    <property type="term" value="F:RNA binding"/>
    <property type="evidence" value="ECO:0007669"/>
    <property type="project" value="InterPro"/>
</dbReference>
<dbReference type="GO" id="GO:0006432">
    <property type="term" value="P:phenylalanyl-tRNA aminoacylation"/>
    <property type="evidence" value="ECO:0007669"/>
    <property type="project" value="UniProtKB-UniRule"/>
</dbReference>
<dbReference type="Gene3D" id="3.30.56.10">
    <property type="match status" value="2"/>
</dbReference>
<dbReference type="Gene3D" id="3.30.930.10">
    <property type="entry name" value="Bira Bifunctional Protein, Domain 2"/>
    <property type="match status" value="1"/>
</dbReference>
<dbReference type="Gene3D" id="3.50.40.10">
    <property type="entry name" value="Phenylalanyl-trna Synthetase, Chain B, domain 3"/>
    <property type="match status" value="1"/>
</dbReference>
<dbReference type="HAMAP" id="MF_00284">
    <property type="entry name" value="Phe_tRNA_synth_beta2"/>
    <property type="match status" value="1"/>
</dbReference>
<dbReference type="InterPro" id="IPR045864">
    <property type="entry name" value="aa-tRNA-synth_II/BPL/LPL"/>
</dbReference>
<dbReference type="InterPro" id="IPR005146">
    <property type="entry name" value="B3/B4_tRNA-bd"/>
</dbReference>
<dbReference type="InterPro" id="IPR009061">
    <property type="entry name" value="DNA-bd_dom_put_sf"/>
</dbReference>
<dbReference type="InterPro" id="IPR045060">
    <property type="entry name" value="Phe-tRNA-ligase_IIc_bsu"/>
</dbReference>
<dbReference type="InterPro" id="IPR004531">
    <property type="entry name" value="Phe-tRNA-synth_IIc_bsu_arc_euk"/>
</dbReference>
<dbReference type="InterPro" id="IPR020825">
    <property type="entry name" value="Phe-tRNA_synthase-like_B3/B4"/>
</dbReference>
<dbReference type="InterPro" id="IPR022918">
    <property type="entry name" value="Phe_tRNA_ligase_beta2_arc"/>
</dbReference>
<dbReference type="InterPro" id="IPR041616">
    <property type="entry name" value="PheRS_beta_core"/>
</dbReference>
<dbReference type="InterPro" id="IPR005147">
    <property type="entry name" value="tRNA_synthase_B5-dom"/>
</dbReference>
<dbReference type="NCBIfam" id="TIGR00471">
    <property type="entry name" value="pheT_arch"/>
    <property type="match status" value="1"/>
</dbReference>
<dbReference type="PANTHER" id="PTHR10947:SF0">
    <property type="entry name" value="PHENYLALANINE--TRNA LIGASE BETA SUBUNIT"/>
    <property type="match status" value="1"/>
</dbReference>
<dbReference type="PANTHER" id="PTHR10947">
    <property type="entry name" value="PHENYLALANYL-TRNA SYNTHETASE BETA CHAIN AND LEUCINE-RICH REPEAT-CONTAINING PROTEIN 47"/>
    <property type="match status" value="1"/>
</dbReference>
<dbReference type="Pfam" id="PF03484">
    <property type="entry name" value="B5"/>
    <property type="match status" value="1"/>
</dbReference>
<dbReference type="Pfam" id="PF17759">
    <property type="entry name" value="tRNA_synthFbeta"/>
    <property type="match status" value="1"/>
</dbReference>
<dbReference type="SMART" id="SM00873">
    <property type="entry name" value="B3_4"/>
    <property type="match status" value="1"/>
</dbReference>
<dbReference type="SMART" id="SM00874">
    <property type="entry name" value="B5"/>
    <property type="match status" value="1"/>
</dbReference>
<dbReference type="SUPFAM" id="SSF55681">
    <property type="entry name" value="Class II aaRS and biotin synthetases"/>
    <property type="match status" value="1"/>
</dbReference>
<dbReference type="SUPFAM" id="SSF46955">
    <property type="entry name" value="Putative DNA-binding domain"/>
    <property type="match status" value="1"/>
</dbReference>
<dbReference type="PROSITE" id="PS51483">
    <property type="entry name" value="B5"/>
    <property type="match status" value="1"/>
</dbReference>
<name>SYFB_BORHD</name>
<evidence type="ECO:0000255" key="1">
    <source>
        <dbReference type="HAMAP-Rule" id="MF_00284"/>
    </source>
</evidence>
<feature type="chain" id="PRO_1000114941" description="Phenylalanine--tRNA ligase beta subunit">
    <location>
        <begin position="1"/>
        <end position="564"/>
    </location>
</feature>
<feature type="domain" description="B5" evidence="1">
    <location>
        <begin position="286"/>
        <end position="362"/>
    </location>
</feature>
<feature type="binding site" evidence="1">
    <location>
        <position position="340"/>
    </location>
    <ligand>
        <name>Mg(2+)</name>
        <dbReference type="ChEBI" id="CHEBI:18420"/>
        <note>shared with alpha subunit</note>
    </ligand>
</feature>
<feature type="binding site" evidence="1">
    <location>
        <position position="346"/>
    </location>
    <ligand>
        <name>Mg(2+)</name>
        <dbReference type="ChEBI" id="CHEBI:18420"/>
        <note>shared with alpha subunit</note>
    </ligand>
</feature>
<feature type="binding site" evidence="1">
    <location>
        <position position="349"/>
    </location>
    <ligand>
        <name>Mg(2+)</name>
        <dbReference type="ChEBI" id="CHEBI:18420"/>
        <note>shared with alpha subunit</note>
    </ligand>
</feature>
<feature type="binding site" evidence="1">
    <location>
        <position position="350"/>
    </location>
    <ligand>
        <name>Mg(2+)</name>
        <dbReference type="ChEBI" id="CHEBI:18420"/>
        <note>shared with alpha subunit</note>
    </ligand>
</feature>
<sequence>MPKVEVYRSILLGKIGKDLTDCELVSILEMAKAEICEFYTGNDKIKIEFNDTNRPDLWSYTGLARQIKTYLFGQLPSFEFFSTADNLQKFYGEILVSPEAFSIRPFIFGFLAKGMICNEQMLETLIQLQEKLCHNYGQKRKRVAMGMYSSASIEFPVSYVTCNSDYRFIPLGMDIEMSIKEINKRHPKGIEYASILEHFTEYPLLLDYNDKVLSYPPVINSHDIGALKVGDTDLFIEVTGTNLEATLLSLSVVACDLHDMGFEILPVKTVFPKETPFGKEIICPYYFQNTLEVSVESVNRMFGSNFTVNDMCLDLKKLGISAYFKELDKFYIIPPVYRNDFLHEVDVIEEIMIGRGLDSFKPELPKDFTLGKLSQIEEFSRKIKNLMIGMGFQEMIYNYLGSRTDFIEKMNIKSDEFLSVANPMTEGYEYVRGSIVPDLLKSESISSNFPYPHKIFEIGKVALKDLSSVDGTMTYDNLAFLMADKEFSFNEINSLVSSLFYYLNIEFKLRESSQTLYINGRGADILINDIILGSFGEVSPYILSNFGIMVPCCVLEINLNKILH</sequence>
<gene>
    <name evidence="1" type="primary">pheT</name>
    <name type="ordered locus">BH0514</name>
</gene>
<comment type="catalytic activity">
    <reaction evidence="1">
        <text>tRNA(Phe) + L-phenylalanine + ATP = L-phenylalanyl-tRNA(Phe) + AMP + diphosphate + H(+)</text>
        <dbReference type="Rhea" id="RHEA:19413"/>
        <dbReference type="Rhea" id="RHEA-COMP:9668"/>
        <dbReference type="Rhea" id="RHEA-COMP:9699"/>
        <dbReference type="ChEBI" id="CHEBI:15378"/>
        <dbReference type="ChEBI" id="CHEBI:30616"/>
        <dbReference type="ChEBI" id="CHEBI:33019"/>
        <dbReference type="ChEBI" id="CHEBI:58095"/>
        <dbReference type="ChEBI" id="CHEBI:78442"/>
        <dbReference type="ChEBI" id="CHEBI:78531"/>
        <dbReference type="ChEBI" id="CHEBI:456215"/>
        <dbReference type="EC" id="6.1.1.20"/>
    </reaction>
</comment>
<comment type="cofactor">
    <cofactor evidence="1">
        <name>Mg(2+)</name>
        <dbReference type="ChEBI" id="CHEBI:18420"/>
    </cofactor>
</comment>
<comment type="subunit">
    <text evidence="1">Tetramer of two alpha and two beta subunits.</text>
</comment>
<comment type="subcellular location">
    <subcellularLocation>
        <location evidence="1">Cytoplasm</location>
    </subcellularLocation>
</comment>
<comment type="similarity">
    <text evidence="1">Belongs to the phenylalanyl-tRNA synthetase beta subunit family. Type 2 subfamily.</text>
</comment>
<proteinExistence type="inferred from homology"/>
<protein>
    <recommendedName>
        <fullName evidence="1">Phenylalanine--tRNA ligase beta subunit</fullName>
        <ecNumber evidence="1">6.1.1.20</ecNumber>
    </recommendedName>
    <alternativeName>
        <fullName evidence="1">Phenylalanyl-tRNA synthetase beta subunit</fullName>
        <shortName evidence="1">PheRS</shortName>
    </alternativeName>
</protein>
<organism>
    <name type="scientific">Borrelia hermsii (strain HS1 / DAH)</name>
    <dbReference type="NCBI Taxonomy" id="314723"/>
    <lineage>
        <taxon>Bacteria</taxon>
        <taxon>Pseudomonadati</taxon>
        <taxon>Spirochaetota</taxon>
        <taxon>Spirochaetia</taxon>
        <taxon>Spirochaetales</taxon>
        <taxon>Borreliaceae</taxon>
        <taxon>Borrelia</taxon>
    </lineage>
</organism>
<accession>B2S0L6</accession>
<reference key="1">
    <citation type="submission" date="2004-12" db="EMBL/GenBank/DDBJ databases">
        <title>The genome sequence of Borrelia hermsii and Borrelia turicatae: comparative analysis of two agents of endemic N. America relapsing fever.</title>
        <authorList>
            <person name="Porcella S.F."/>
            <person name="Raffel S.J."/>
            <person name="Schrumpf M.E."/>
            <person name="Montgomery B."/>
            <person name="Smith T."/>
            <person name="Schwan T.G."/>
        </authorList>
    </citation>
    <scope>NUCLEOTIDE SEQUENCE [LARGE SCALE GENOMIC DNA]</scope>
    <source>
        <strain>HS1 / DAH</strain>
    </source>
</reference>